<proteinExistence type="inferred from homology"/>
<reference key="1">
    <citation type="journal article" date="2008" name="Genome Biol.">
        <title>The complete genome, comparative and functional analysis of Stenotrophomonas maltophilia reveals an organism heavily shielded by drug resistance determinants.</title>
        <authorList>
            <person name="Crossman L.C."/>
            <person name="Gould V.C."/>
            <person name="Dow J.M."/>
            <person name="Vernikos G.S."/>
            <person name="Okazaki A."/>
            <person name="Sebaihia M."/>
            <person name="Saunders D."/>
            <person name="Arrowsmith C."/>
            <person name="Carver T."/>
            <person name="Peters N."/>
            <person name="Adlem E."/>
            <person name="Kerhornou A."/>
            <person name="Lord A."/>
            <person name="Murphy L."/>
            <person name="Seeger K."/>
            <person name="Squares R."/>
            <person name="Rutter S."/>
            <person name="Quail M.A."/>
            <person name="Rajandream M.A."/>
            <person name="Harris D."/>
            <person name="Churcher C."/>
            <person name="Bentley S.D."/>
            <person name="Parkhill J."/>
            <person name="Thomson N.R."/>
            <person name="Avison M.B."/>
        </authorList>
    </citation>
    <scope>NUCLEOTIDE SEQUENCE [LARGE SCALE GENOMIC DNA]</scope>
    <source>
        <strain>K279a</strain>
    </source>
</reference>
<feature type="chain" id="PRO_1000138704" description="Putative NADH dehydrogenase/NAD(P)H nitroreductase Smlt0482">
    <location>
        <begin position="1"/>
        <end position="196"/>
    </location>
</feature>
<keyword id="KW-0285">Flavoprotein</keyword>
<keyword id="KW-0288">FMN</keyword>
<keyword id="KW-0520">NAD</keyword>
<keyword id="KW-0521">NADP</keyword>
<keyword id="KW-0560">Oxidoreductase</keyword>
<keyword id="KW-1185">Reference proteome</keyword>
<evidence type="ECO:0000255" key="1">
    <source>
        <dbReference type="HAMAP-Rule" id="MF_01204"/>
    </source>
</evidence>
<sequence>MSHALDAAALDQLFRTARTQNAFLDKPVPASLLQELYDLVKWGPTAANTTPARFVFVTSKEAKAKLAPALSEGNHDKTMAAPVTAIIGFDLDFHEKLPYLFPHTDAKAWFDGPQEGRHEAALRNGSLQGAYLILAARALGLDAGPMSGFDPAKVDEAFFAGTSIKSNFLVNLGYGDPAGLFPRLPRLSFDEAARIA</sequence>
<organism>
    <name type="scientific">Stenotrophomonas maltophilia (strain K279a)</name>
    <dbReference type="NCBI Taxonomy" id="522373"/>
    <lineage>
        <taxon>Bacteria</taxon>
        <taxon>Pseudomonadati</taxon>
        <taxon>Pseudomonadota</taxon>
        <taxon>Gammaproteobacteria</taxon>
        <taxon>Lysobacterales</taxon>
        <taxon>Lysobacteraceae</taxon>
        <taxon>Stenotrophomonas</taxon>
        <taxon>Stenotrophomonas maltophilia group</taxon>
    </lineage>
</organism>
<dbReference type="EC" id="1.-.-.-" evidence="1"/>
<dbReference type="EMBL" id="AM743169">
    <property type="protein sequence ID" value="CAQ44075.1"/>
    <property type="molecule type" value="Genomic_DNA"/>
</dbReference>
<dbReference type="RefSeq" id="WP_005407836.1">
    <property type="nucleotide sequence ID" value="NC_010943.1"/>
</dbReference>
<dbReference type="SMR" id="B2FKV6"/>
<dbReference type="EnsemblBacteria" id="CAQ44075">
    <property type="protein sequence ID" value="CAQ44075"/>
    <property type="gene ID" value="Smlt0482"/>
</dbReference>
<dbReference type="KEGG" id="sml:Smlt0482"/>
<dbReference type="eggNOG" id="COG0778">
    <property type="taxonomic scope" value="Bacteria"/>
</dbReference>
<dbReference type="HOGENOM" id="CLU_084441_0_0_6"/>
<dbReference type="Proteomes" id="UP000008840">
    <property type="component" value="Chromosome"/>
</dbReference>
<dbReference type="GO" id="GO:0016491">
    <property type="term" value="F:oxidoreductase activity"/>
    <property type="evidence" value="ECO:0007669"/>
    <property type="project" value="UniProtKB-UniRule"/>
</dbReference>
<dbReference type="CDD" id="cd02148">
    <property type="entry name" value="RutE-like"/>
    <property type="match status" value="1"/>
</dbReference>
<dbReference type="Gene3D" id="3.40.109.10">
    <property type="entry name" value="NADH Oxidase"/>
    <property type="match status" value="1"/>
</dbReference>
<dbReference type="HAMAP" id="MF_01204">
    <property type="entry name" value="Oxidoreductase_RutE_HadB"/>
    <property type="match status" value="1"/>
</dbReference>
<dbReference type="InterPro" id="IPR029479">
    <property type="entry name" value="Nitroreductase"/>
</dbReference>
<dbReference type="InterPro" id="IPR000415">
    <property type="entry name" value="Nitroreductase-like"/>
</dbReference>
<dbReference type="InterPro" id="IPR050461">
    <property type="entry name" value="Nitroreductase_HadB/RutE"/>
</dbReference>
<dbReference type="InterPro" id="IPR023936">
    <property type="entry name" value="RutE-like"/>
</dbReference>
<dbReference type="NCBIfam" id="NF003768">
    <property type="entry name" value="PRK05365.1"/>
    <property type="match status" value="1"/>
</dbReference>
<dbReference type="PANTHER" id="PTHR43543">
    <property type="entry name" value="MALONIC SEMIALDEHYDE REDUCTASE RUTE-RELATED"/>
    <property type="match status" value="1"/>
</dbReference>
<dbReference type="PANTHER" id="PTHR43543:SF1">
    <property type="entry name" value="MALONIC SEMIALDEHYDE REDUCTASE RUTE-RELATED"/>
    <property type="match status" value="1"/>
</dbReference>
<dbReference type="Pfam" id="PF00881">
    <property type="entry name" value="Nitroreductase"/>
    <property type="match status" value="1"/>
</dbReference>
<dbReference type="SUPFAM" id="SSF55469">
    <property type="entry name" value="FMN-dependent nitroreductase-like"/>
    <property type="match status" value="1"/>
</dbReference>
<accession>B2FKV6</accession>
<protein>
    <recommendedName>
        <fullName evidence="1">Putative NADH dehydrogenase/NAD(P)H nitroreductase Smlt0482</fullName>
        <ecNumber evidence="1">1.-.-.-</ecNumber>
    </recommendedName>
</protein>
<name>Y482_STRMK</name>
<comment type="cofactor">
    <cofactor evidence="1">
        <name>FMN</name>
        <dbReference type="ChEBI" id="CHEBI:58210"/>
    </cofactor>
</comment>
<comment type="similarity">
    <text evidence="1">Belongs to the nitroreductase family. HadB/RutE subfamily.</text>
</comment>
<gene>
    <name type="ordered locus">Smlt0482</name>
</gene>